<accession>Q0THG4</accession>
<dbReference type="EMBL" id="CP000247">
    <property type="protein sequence ID" value="ABG69615.1"/>
    <property type="molecule type" value="Genomic_DNA"/>
</dbReference>
<dbReference type="RefSeq" id="WP_001174940.1">
    <property type="nucleotide sequence ID" value="NC_008253.1"/>
</dbReference>
<dbReference type="SMR" id="Q0THG4"/>
<dbReference type="KEGG" id="ecp:ECP_1610"/>
<dbReference type="HOGENOM" id="CLU_012893_6_0_6"/>
<dbReference type="Proteomes" id="UP000009182">
    <property type="component" value="Chromosome"/>
</dbReference>
<dbReference type="GO" id="GO:0005886">
    <property type="term" value="C:plasma membrane"/>
    <property type="evidence" value="ECO:0007669"/>
    <property type="project" value="UniProtKB-SubCell"/>
</dbReference>
<dbReference type="GO" id="GO:0015297">
    <property type="term" value="F:antiporter activity"/>
    <property type="evidence" value="ECO:0007669"/>
    <property type="project" value="UniProtKB-UniRule"/>
</dbReference>
<dbReference type="GO" id="GO:0042910">
    <property type="term" value="F:xenobiotic transmembrane transporter activity"/>
    <property type="evidence" value="ECO:0007669"/>
    <property type="project" value="UniProtKB-UniRule"/>
</dbReference>
<dbReference type="GO" id="GO:0006814">
    <property type="term" value="P:sodium ion transport"/>
    <property type="evidence" value="ECO:0007669"/>
    <property type="project" value="UniProtKB-UniRule"/>
</dbReference>
<dbReference type="GO" id="GO:0006855">
    <property type="term" value="P:xenobiotic transmembrane transport"/>
    <property type="evidence" value="ECO:0007669"/>
    <property type="project" value="UniProtKB-UniRule"/>
</dbReference>
<dbReference type="CDD" id="cd13131">
    <property type="entry name" value="MATE_NorM_like"/>
    <property type="match status" value="1"/>
</dbReference>
<dbReference type="HAMAP" id="MF_00400">
    <property type="entry name" value="MdtK"/>
    <property type="match status" value="1"/>
</dbReference>
<dbReference type="InterPro" id="IPR002528">
    <property type="entry name" value="MATE_fam"/>
</dbReference>
<dbReference type="InterPro" id="IPR050222">
    <property type="entry name" value="MATE_MdtK"/>
</dbReference>
<dbReference type="InterPro" id="IPR048279">
    <property type="entry name" value="MdtK-like"/>
</dbReference>
<dbReference type="InterPro" id="IPR022913">
    <property type="entry name" value="Multidrug-R_MdtK"/>
</dbReference>
<dbReference type="NCBIfam" id="TIGR00797">
    <property type="entry name" value="matE"/>
    <property type="match status" value="1"/>
</dbReference>
<dbReference type="PANTHER" id="PTHR43298:SF2">
    <property type="entry name" value="FMN_FAD EXPORTER YEEO-RELATED"/>
    <property type="match status" value="1"/>
</dbReference>
<dbReference type="PANTHER" id="PTHR43298">
    <property type="entry name" value="MULTIDRUG RESISTANCE PROTEIN NORM-RELATED"/>
    <property type="match status" value="1"/>
</dbReference>
<dbReference type="Pfam" id="PF01554">
    <property type="entry name" value="MatE"/>
    <property type="match status" value="2"/>
</dbReference>
<dbReference type="PIRSF" id="PIRSF006603">
    <property type="entry name" value="DinF"/>
    <property type="match status" value="1"/>
</dbReference>
<reference key="1">
    <citation type="journal article" date="2006" name="Mol. Microbiol.">
        <title>Role of pathogenicity island-associated integrases in the genome plasticity of uropathogenic Escherichia coli strain 536.</title>
        <authorList>
            <person name="Hochhut B."/>
            <person name="Wilde C."/>
            <person name="Balling G."/>
            <person name="Middendorf B."/>
            <person name="Dobrindt U."/>
            <person name="Brzuszkiewicz E."/>
            <person name="Gottschalk G."/>
            <person name="Carniel E."/>
            <person name="Hacker J."/>
        </authorList>
    </citation>
    <scope>NUCLEOTIDE SEQUENCE [LARGE SCALE GENOMIC DNA]</scope>
    <source>
        <strain>536 / UPEC</strain>
    </source>
</reference>
<organism>
    <name type="scientific">Escherichia coli O6:K15:H31 (strain 536 / UPEC)</name>
    <dbReference type="NCBI Taxonomy" id="362663"/>
    <lineage>
        <taxon>Bacteria</taxon>
        <taxon>Pseudomonadati</taxon>
        <taxon>Pseudomonadota</taxon>
        <taxon>Gammaproteobacteria</taxon>
        <taxon>Enterobacterales</taxon>
        <taxon>Enterobacteriaceae</taxon>
        <taxon>Escherichia</taxon>
    </lineage>
</organism>
<protein>
    <recommendedName>
        <fullName evidence="2">Multidrug resistance protein MdtK</fullName>
    </recommendedName>
    <alternativeName>
        <fullName evidence="2">Multidrug-efflux transporter</fullName>
    </alternativeName>
</protein>
<name>MDTK_ECOL5</name>
<evidence type="ECO:0000255" key="1"/>
<evidence type="ECO:0000255" key="2">
    <source>
        <dbReference type="HAMAP-Rule" id="MF_00400"/>
    </source>
</evidence>
<sequence>MQKYISEARLLLALAIPVILAQIAQTAMGFVDTVMAGGYSATDMAAVAIGTSIWLPAILFGHGLLLALTPVIAQLNGSGRRERIAHQVRQGFWLAGFVSVLIMLVLWNAGYIIRSMENIDPALADKAVGYLRALLWGAPGYLFFQVARNQCEGLAKTKPGMVMGFIGLLVNIPVNYIFIYGHFGMPELGGVGCGVATAAVYWVMFLAMVSYIKRARSMRDIRNEKGTAKPDPAVMKRLIQLGLPIALALFFEVTLFAVVALLVSPLGIVDVAGHQIALNFSSLMFVLPMSLAAAVTIRVGYRLGQGSTLDAQTAARTGLMVGVCMATLTAIFTVSLREQIALLYNDNPEVVTLAAHLMLLAAVYQISDSIQVIGSGILRGYKDTRSIFYITFTAYWVLGLPSGYILALTDLVVEPMGPAGFWIGFIIGLTSAAIMMMLRMRFLQRLPSAIILQRASR</sequence>
<keyword id="KW-0050">Antiport</keyword>
<keyword id="KW-0997">Cell inner membrane</keyword>
<keyword id="KW-1003">Cell membrane</keyword>
<keyword id="KW-0406">Ion transport</keyword>
<keyword id="KW-0472">Membrane</keyword>
<keyword id="KW-0915">Sodium</keyword>
<keyword id="KW-0739">Sodium transport</keyword>
<keyword id="KW-0812">Transmembrane</keyword>
<keyword id="KW-1133">Transmembrane helix</keyword>
<keyword id="KW-0813">Transport</keyword>
<gene>
    <name evidence="2" type="primary">mdtK</name>
    <name type="ordered locus">ECP_1610</name>
</gene>
<proteinExistence type="inferred from homology"/>
<feature type="chain" id="PRO_0000279851" description="Multidrug resistance protein MdtK">
    <location>
        <begin position="1"/>
        <end position="457"/>
    </location>
</feature>
<feature type="topological domain" description="Cytoplasmic" evidence="1">
    <location>
        <begin position="1"/>
        <end position="10"/>
    </location>
</feature>
<feature type="transmembrane region" description="Helical" evidence="2">
    <location>
        <begin position="11"/>
        <end position="31"/>
    </location>
</feature>
<feature type="topological domain" description="Periplasmic" evidence="1">
    <location>
        <begin position="32"/>
        <end position="52"/>
    </location>
</feature>
<feature type="transmembrane region" description="Helical" evidence="2">
    <location>
        <begin position="53"/>
        <end position="73"/>
    </location>
</feature>
<feature type="topological domain" description="Cytoplasmic" evidence="1">
    <location>
        <begin position="74"/>
        <end position="92"/>
    </location>
</feature>
<feature type="transmembrane region" description="Helical" evidence="2">
    <location>
        <begin position="93"/>
        <end position="113"/>
    </location>
</feature>
<feature type="topological domain" description="Periplasmic" evidence="1">
    <location>
        <begin position="114"/>
        <end position="126"/>
    </location>
</feature>
<feature type="transmembrane region" description="Helical" evidence="2">
    <location>
        <begin position="127"/>
        <end position="147"/>
    </location>
</feature>
<feature type="topological domain" description="Cytoplasmic" evidence="1">
    <location>
        <begin position="148"/>
        <end position="159"/>
    </location>
</feature>
<feature type="transmembrane region" description="Helical" evidence="2">
    <location>
        <begin position="160"/>
        <end position="180"/>
    </location>
</feature>
<feature type="topological domain" description="Periplasmic" evidence="1">
    <location>
        <begin position="181"/>
        <end position="188"/>
    </location>
</feature>
<feature type="transmembrane region" description="Helical" evidence="2">
    <location>
        <begin position="189"/>
        <end position="209"/>
    </location>
</feature>
<feature type="topological domain" description="Cytoplasmic" evidence="1">
    <location>
        <begin position="210"/>
        <end position="242"/>
    </location>
</feature>
<feature type="transmembrane region" description="Helical" evidence="2">
    <location>
        <begin position="243"/>
        <end position="263"/>
    </location>
</feature>
<feature type="topological domain" description="Periplasmic" evidence="1">
    <location>
        <begin position="264"/>
        <end position="275"/>
    </location>
</feature>
<feature type="transmembrane region" description="Helical" evidence="2">
    <location>
        <begin position="276"/>
        <end position="296"/>
    </location>
</feature>
<feature type="topological domain" description="Cytoplasmic" evidence="1">
    <location>
        <begin position="297"/>
        <end position="313"/>
    </location>
</feature>
<feature type="transmembrane region" description="Helical" evidence="2">
    <location>
        <begin position="314"/>
        <end position="334"/>
    </location>
</feature>
<feature type="topological domain" description="Periplasmic" evidence="1">
    <location>
        <begin position="335"/>
        <end position="349"/>
    </location>
</feature>
<feature type="transmembrane region" description="Helical" evidence="2">
    <location>
        <begin position="350"/>
        <end position="370"/>
    </location>
</feature>
<feature type="topological domain" description="Cytoplasmic" evidence="1">
    <location>
        <begin position="371"/>
        <end position="386"/>
    </location>
</feature>
<feature type="transmembrane region" description="Helical" evidence="2">
    <location>
        <begin position="387"/>
        <end position="407"/>
    </location>
</feature>
<feature type="topological domain" description="Periplasmic" evidence="1">
    <location>
        <begin position="408"/>
        <end position="417"/>
    </location>
</feature>
<feature type="transmembrane region" description="Helical" evidence="2">
    <location>
        <begin position="418"/>
        <end position="438"/>
    </location>
</feature>
<feature type="topological domain" description="Cytoplasmic" evidence="1">
    <location>
        <begin position="439"/>
        <end position="457"/>
    </location>
</feature>
<comment type="function">
    <text evidence="2">Multidrug efflux pump that functions probably as a Na(+)/drug antiporter.</text>
</comment>
<comment type="subcellular location">
    <subcellularLocation>
        <location evidence="2">Cell inner membrane</location>
        <topology evidence="2">Multi-pass membrane protein</topology>
    </subcellularLocation>
</comment>
<comment type="similarity">
    <text evidence="2">Belongs to the multi antimicrobial extrusion (MATE) (TC 2.A.66.1) family. MdtK subfamily.</text>
</comment>